<organism>
    <name type="scientific">Acidiphilium cryptum (strain JF-5)</name>
    <dbReference type="NCBI Taxonomy" id="349163"/>
    <lineage>
        <taxon>Bacteria</taxon>
        <taxon>Pseudomonadati</taxon>
        <taxon>Pseudomonadota</taxon>
        <taxon>Alphaproteobacteria</taxon>
        <taxon>Acetobacterales</taxon>
        <taxon>Acidocellaceae</taxon>
        <taxon>Acidiphilium</taxon>
    </lineage>
</organism>
<feature type="chain" id="PRO_0000307947" description="Large ribosomal subunit protein uL1">
    <location>
        <begin position="1"/>
        <end position="230"/>
    </location>
</feature>
<evidence type="ECO:0000255" key="1">
    <source>
        <dbReference type="HAMAP-Rule" id="MF_01318"/>
    </source>
</evidence>
<evidence type="ECO:0000305" key="2"/>
<proteinExistence type="inferred from homology"/>
<sequence>MAKNKRLAKAQSAVDRAKLYPVVEAMALVKSNATAKFDETVELSLNLGIDPRHADQMVRGLISLPNGTGKTLRVGVFARGPKAEEAKAAGADVVGAEDLAELVQNGTIEFDRCIATPDMMALVGRLGKILGPRGLMPNPKLGTVTMDVKGAITAAKSGQVEFRAEKAGIIHAGIGKASFEAEKLIENAKALVDAIQKAKPTGAKGTYLQKAALSSTMGPGVRVDVSSLTA</sequence>
<name>RL1_ACICJ</name>
<protein>
    <recommendedName>
        <fullName evidence="1">Large ribosomal subunit protein uL1</fullName>
    </recommendedName>
    <alternativeName>
        <fullName evidence="2">50S ribosomal protein L1</fullName>
    </alternativeName>
</protein>
<dbReference type="EMBL" id="CP000697">
    <property type="protein sequence ID" value="ABQ31156.1"/>
    <property type="molecule type" value="Genomic_DNA"/>
</dbReference>
<dbReference type="RefSeq" id="WP_007424164.1">
    <property type="nucleotide sequence ID" value="NC_009484.1"/>
</dbReference>
<dbReference type="SMR" id="A5FZX4"/>
<dbReference type="STRING" id="349163.Acry_1955"/>
<dbReference type="KEGG" id="acr:Acry_1955"/>
<dbReference type="eggNOG" id="COG0081">
    <property type="taxonomic scope" value="Bacteria"/>
</dbReference>
<dbReference type="HOGENOM" id="CLU_062853_0_0_5"/>
<dbReference type="Proteomes" id="UP000000245">
    <property type="component" value="Chromosome"/>
</dbReference>
<dbReference type="GO" id="GO:0022625">
    <property type="term" value="C:cytosolic large ribosomal subunit"/>
    <property type="evidence" value="ECO:0007669"/>
    <property type="project" value="TreeGrafter"/>
</dbReference>
<dbReference type="GO" id="GO:0019843">
    <property type="term" value="F:rRNA binding"/>
    <property type="evidence" value="ECO:0007669"/>
    <property type="project" value="UniProtKB-UniRule"/>
</dbReference>
<dbReference type="GO" id="GO:0003735">
    <property type="term" value="F:structural constituent of ribosome"/>
    <property type="evidence" value="ECO:0007669"/>
    <property type="project" value="InterPro"/>
</dbReference>
<dbReference type="GO" id="GO:0000049">
    <property type="term" value="F:tRNA binding"/>
    <property type="evidence" value="ECO:0007669"/>
    <property type="project" value="UniProtKB-KW"/>
</dbReference>
<dbReference type="GO" id="GO:0006417">
    <property type="term" value="P:regulation of translation"/>
    <property type="evidence" value="ECO:0007669"/>
    <property type="project" value="UniProtKB-KW"/>
</dbReference>
<dbReference type="GO" id="GO:0006412">
    <property type="term" value="P:translation"/>
    <property type="evidence" value="ECO:0007669"/>
    <property type="project" value="UniProtKB-UniRule"/>
</dbReference>
<dbReference type="CDD" id="cd00403">
    <property type="entry name" value="Ribosomal_L1"/>
    <property type="match status" value="1"/>
</dbReference>
<dbReference type="FunFam" id="3.40.50.790:FF:000001">
    <property type="entry name" value="50S ribosomal protein L1"/>
    <property type="match status" value="1"/>
</dbReference>
<dbReference type="Gene3D" id="3.30.190.20">
    <property type="match status" value="1"/>
</dbReference>
<dbReference type="Gene3D" id="3.40.50.790">
    <property type="match status" value="1"/>
</dbReference>
<dbReference type="HAMAP" id="MF_01318_B">
    <property type="entry name" value="Ribosomal_uL1_B"/>
    <property type="match status" value="1"/>
</dbReference>
<dbReference type="InterPro" id="IPR005878">
    <property type="entry name" value="Ribosom_uL1_bac-type"/>
</dbReference>
<dbReference type="InterPro" id="IPR002143">
    <property type="entry name" value="Ribosomal_uL1"/>
</dbReference>
<dbReference type="InterPro" id="IPR023674">
    <property type="entry name" value="Ribosomal_uL1-like"/>
</dbReference>
<dbReference type="InterPro" id="IPR028364">
    <property type="entry name" value="Ribosomal_uL1/biogenesis"/>
</dbReference>
<dbReference type="InterPro" id="IPR016095">
    <property type="entry name" value="Ribosomal_uL1_3-a/b-sand"/>
</dbReference>
<dbReference type="InterPro" id="IPR023673">
    <property type="entry name" value="Ribosomal_uL1_CS"/>
</dbReference>
<dbReference type="NCBIfam" id="TIGR01169">
    <property type="entry name" value="rplA_bact"/>
    <property type="match status" value="1"/>
</dbReference>
<dbReference type="PANTHER" id="PTHR36427">
    <property type="entry name" value="54S RIBOSOMAL PROTEIN L1, MITOCHONDRIAL"/>
    <property type="match status" value="1"/>
</dbReference>
<dbReference type="PANTHER" id="PTHR36427:SF3">
    <property type="entry name" value="LARGE RIBOSOMAL SUBUNIT PROTEIN UL1M"/>
    <property type="match status" value="1"/>
</dbReference>
<dbReference type="Pfam" id="PF00687">
    <property type="entry name" value="Ribosomal_L1"/>
    <property type="match status" value="1"/>
</dbReference>
<dbReference type="PIRSF" id="PIRSF002155">
    <property type="entry name" value="Ribosomal_L1"/>
    <property type="match status" value="1"/>
</dbReference>
<dbReference type="SUPFAM" id="SSF56808">
    <property type="entry name" value="Ribosomal protein L1"/>
    <property type="match status" value="1"/>
</dbReference>
<dbReference type="PROSITE" id="PS01199">
    <property type="entry name" value="RIBOSOMAL_L1"/>
    <property type="match status" value="1"/>
</dbReference>
<gene>
    <name evidence="1" type="primary">rplA</name>
    <name type="ordered locus">Acry_1955</name>
</gene>
<keyword id="KW-1185">Reference proteome</keyword>
<keyword id="KW-0678">Repressor</keyword>
<keyword id="KW-0687">Ribonucleoprotein</keyword>
<keyword id="KW-0689">Ribosomal protein</keyword>
<keyword id="KW-0694">RNA-binding</keyword>
<keyword id="KW-0699">rRNA-binding</keyword>
<keyword id="KW-0810">Translation regulation</keyword>
<keyword id="KW-0820">tRNA-binding</keyword>
<comment type="function">
    <text evidence="1">Binds directly to 23S rRNA. The L1 stalk is quite mobile in the ribosome, and is involved in E site tRNA release.</text>
</comment>
<comment type="function">
    <text evidence="1">Protein L1 is also a translational repressor protein, it controls the translation of the L11 operon by binding to its mRNA.</text>
</comment>
<comment type="subunit">
    <text evidence="1">Part of the 50S ribosomal subunit.</text>
</comment>
<comment type="similarity">
    <text evidence="1">Belongs to the universal ribosomal protein uL1 family.</text>
</comment>
<reference key="1">
    <citation type="submission" date="2007-05" db="EMBL/GenBank/DDBJ databases">
        <title>Complete sequence of chromosome of Acidiphilium cryptum JF-5.</title>
        <authorList>
            <consortium name="US DOE Joint Genome Institute"/>
            <person name="Copeland A."/>
            <person name="Lucas S."/>
            <person name="Lapidus A."/>
            <person name="Barry K."/>
            <person name="Detter J.C."/>
            <person name="Glavina del Rio T."/>
            <person name="Hammon N."/>
            <person name="Israni S."/>
            <person name="Dalin E."/>
            <person name="Tice H."/>
            <person name="Pitluck S."/>
            <person name="Sims D."/>
            <person name="Brettin T."/>
            <person name="Bruce D."/>
            <person name="Han C."/>
            <person name="Schmutz J."/>
            <person name="Larimer F."/>
            <person name="Land M."/>
            <person name="Hauser L."/>
            <person name="Kyrpides N."/>
            <person name="Kim E."/>
            <person name="Magnuson T."/>
            <person name="Richardson P."/>
        </authorList>
    </citation>
    <scope>NUCLEOTIDE SEQUENCE [LARGE SCALE GENOMIC DNA]</scope>
    <source>
        <strain>JF-5</strain>
    </source>
</reference>
<accession>A5FZX4</accession>